<sequence>MNESPRASYGSTGAHPGYDPVLVIDFGAQYAQLIARRVRECHVYSEIVPWDMPVAEILARRPAALILSGGPKSVYSPGAPRVDPALFAAGVPVLGICYGHQVMAQALDGTVARTGTAEYGATRLRVDDPGVLFDGLPTSQQVWMSHGDSVTAAPPGFRVTASTPSTPVAAFEDPTRRLYGVQFHPEVVHSERGMDVLRHFLLVGAGCRPSWTMINIVEEAVTAVRAQVGNGRLICGLSGGVDSAVAAALVQRAVGDTLTCVFVDHGLLRAGEAEQVERDFVASTGVDLVHVKAADRFASALAGVTDPEQKRKIIGREFIRVFEESARELDARAEAEGTHIGFLVQGTLYPDVIESGSPTAAKIKSHHNVGGLPDDLQFDLVEPLRTLFKDEVRRLGEELGLPEDIVWRQPFPGPGLAVRIIGEVTPERLEIVRAADAVVRDEIRRAGLDREIWQVFAVLLADVRSVGVQGDERTYGFPVVLRAVTSEDAMTADWARLPYDLLERISNRVVNEVGQVNRVVYDITSKPPGTIEWE</sequence>
<dbReference type="EC" id="6.3.5.2" evidence="1"/>
<dbReference type="EMBL" id="CP000820">
    <property type="protein sequence ID" value="ABW15333.1"/>
    <property type="molecule type" value="Genomic_DNA"/>
</dbReference>
<dbReference type="RefSeq" id="WP_020463431.1">
    <property type="nucleotide sequence ID" value="NC_009921.1"/>
</dbReference>
<dbReference type="SMR" id="A8LAX2"/>
<dbReference type="STRING" id="298653.Franean1_5989"/>
<dbReference type="KEGG" id="fre:Franean1_5989"/>
<dbReference type="eggNOG" id="COG0518">
    <property type="taxonomic scope" value="Bacteria"/>
</dbReference>
<dbReference type="eggNOG" id="COG0519">
    <property type="taxonomic scope" value="Bacteria"/>
</dbReference>
<dbReference type="HOGENOM" id="CLU_014340_0_5_11"/>
<dbReference type="UniPathway" id="UPA00189">
    <property type="reaction ID" value="UER00296"/>
</dbReference>
<dbReference type="GO" id="GO:0005829">
    <property type="term" value="C:cytosol"/>
    <property type="evidence" value="ECO:0007669"/>
    <property type="project" value="TreeGrafter"/>
</dbReference>
<dbReference type="GO" id="GO:0005524">
    <property type="term" value="F:ATP binding"/>
    <property type="evidence" value="ECO:0007669"/>
    <property type="project" value="UniProtKB-UniRule"/>
</dbReference>
<dbReference type="GO" id="GO:0003921">
    <property type="term" value="F:GMP synthase activity"/>
    <property type="evidence" value="ECO:0007669"/>
    <property type="project" value="InterPro"/>
</dbReference>
<dbReference type="CDD" id="cd01742">
    <property type="entry name" value="GATase1_GMP_Synthase"/>
    <property type="match status" value="1"/>
</dbReference>
<dbReference type="CDD" id="cd01997">
    <property type="entry name" value="GMP_synthase_C"/>
    <property type="match status" value="1"/>
</dbReference>
<dbReference type="FunFam" id="3.30.300.10:FF:000002">
    <property type="entry name" value="GMP synthase [glutamine-hydrolyzing]"/>
    <property type="match status" value="1"/>
</dbReference>
<dbReference type="FunFam" id="3.40.50.620:FF:000001">
    <property type="entry name" value="GMP synthase [glutamine-hydrolyzing]"/>
    <property type="match status" value="1"/>
</dbReference>
<dbReference type="FunFam" id="3.40.50.880:FF:000001">
    <property type="entry name" value="GMP synthase [glutamine-hydrolyzing]"/>
    <property type="match status" value="1"/>
</dbReference>
<dbReference type="Gene3D" id="3.30.300.10">
    <property type="match status" value="1"/>
</dbReference>
<dbReference type="Gene3D" id="3.40.50.880">
    <property type="match status" value="1"/>
</dbReference>
<dbReference type="Gene3D" id="3.40.50.620">
    <property type="entry name" value="HUPs"/>
    <property type="match status" value="1"/>
</dbReference>
<dbReference type="HAMAP" id="MF_00344">
    <property type="entry name" value="GMP_synthase"/>
    <property type="match status" value="1"/>
</dbReference>
<dbReference type="InterPro" id="IPR029062">
    <property type="entry name" value="Class_I_gatase-like"/>
</dbReference>
<dbReference type="InterPro" id="IPR017926">
    <property type="entry name" value="GATASE"/>
</dbReference>
<dbReference type="InterPro" id="IPR001674">
    <property type="entry name" value="GMP_synth_C"/>
</dbReference>
<dbReference type="InterPro" id="IPR004739">
    <property type="entry name" value="GMP_synth_GATase"/>
</dbReference>
<dbReference type="InterPro" id="IPR022955">
    <property type="entry name" value="GMP_synthase"/>
</dbReference>
<dbReference type="InterPro" id="IPR025777">
    <property type="entry name" value="GMPS_ATP_PPase_dom"/>
</dbReference>
<dbReference type="InterPro" id="IPR022310">
    <property type="entry name" value="NAD/GMP_synthase"/>
</dbReference>
<dbReference type="InterPro" id="IPR014729">
    <property type="entry name" value="Rossmann-like_a/b/a_fold"/>
</dbReference>
<dbReference type="NCBIfam" id="TIGR00884">
    <property type="entry name" value="guaA_Cterm"/>
    <property type="match status" value="1"/>
</dbReference>
<dbReference type="NCBIfam" id="TIGR00888">
    <property type="entry name" value="guaA_Nterm"/>
    <property type="match status" value="1"/>
</dbReference>
<dbReference type="NCBIfam" id="NF000848">
    <property type="entry name" value="PRK00074.1"/>
    <property type="match status" value="1"/>
</dbReference>
<dbReference type="PANTHER" id="PTHR11922:SF2">
    <property type="entry name" value="GMP SYNTHASE [GLUTAMINE-HYDROLYZING]"/>
    <property type="match status" value="1"/>
</dbReference>
<dbReference type="PANTHER" id="PTHR11922">
    <property type="entry name" value="GMP SYNTHASE-RELATED"/>
    <property type="match status" value="1"/>
</dbReference>
<dbReference type="Pfam" id="PF00117">
    <property type="entry name" value="GATase"/>
    <property type="match status" value="1"/>
</dbReference>
<dbReference type="Pfam" id="PF00958">
    <property type="entry name" value="GMP_synt_C"/>
    <property type="match status" value="1"/>
</dbReference>
<dbReference type="Pfam" id="PF02540">
    <property type="entry name" value="NAD_synthase"/>
    <property type="match status" value="1"/>
</dbReference>
<dbReference type="PRINTS" id="PR00097">
    <property type="entry name" value="ANTSNTHASEII"/>
</dbReference>
<dbReference type="PRINTS" id="PR00099">
    <property type="entry name" value="CPSGATASE"/>
</dbReference>
<dbReference type="PRINTS" id="PR00096">
    <property type="entry name" value="GATASE"/>
</dbReference>
<dbReference type="SUPFAM" id="SSF52402">
    <property type="entry name" value="Adenine nucleotide alpha hydrolases-like"/>
    <property type="match status" value="1"/>
</dbReference>
<dbReference type="SUPFAM" id="SSF52317">
    <property type="entry name" value="Class I glutamine amidotransferase-like"/>
    <property type="match status" value="1"/>
</dbReference>
<dbReference type="SUPFAM" id="SSF54810">
    <property type="entry name" value="GMP synthetase C-terminal dimerisation domain"/>
    <property type="match status" value="1"/>
</dbReference>
<dbReference type="PROSITE" id="PS51273">
    <property type="entry name" value="GATASE_TYPE_1"/>
    <property type="match status" value="1"/>
</dbReference>
<dbReference type="PROSITE" id="PS51553">
    <property type="entry name" value="GMPS_ATP_PPASE"/>
    <property type="match status" value="1"/>
</dbReference>
<accession>A8LAX2</accession>
<keyword id="KW-0067">ATP-binding</keyword>
<keyword id="KW-0315">Glutamine amidotransferase</keyword>
<keyword id="KW-0332">GMP biosynthesis</keyword>
<keyword id="KW-0436">Ligase</keyword>
<keyword id="KW-0547">Nucleotide-binding</keyword>
<keyword id="KW-0658">Purine biosynthesis</keyword>
<organism>
    <name type="scientific">Parafrankia sp. (strain EAN1pec)</name>
    <dbReference type="NCBI Taxonomy" id="298653"/>
    <lineage>
        <taxon>Bacteria</taxon>
        <taxon>Bacillati</taxon>
        <taxon>Actinomycetota</taxon>
        <taxon>Actinomycetes</taxon>
        <taxon>Frankiales</taxon>
        <taxon>Frankiaceae</taxon>
        <taxon>Parafrankia</taxon>
    </lineage>
</organism>
<evidence type="ECO:0000255" key="1">
    <source>
        <dbReference type="HAMAP-Rule" id="MF_00344"/>
    </source>
</evidence>
<reference key="1">
    <citation type="journal article" date="2007" name="Genome Res.">
        <title>Genome characteristics of facultatively symbiotic Frankia sp. strains reflect host range and host plant biogeography.</title>
        <authorList>
            <person name="Normand P."/>
            <person name="Lapierre P."/>
            <person name="Tisa L.S."/>
            <person name="Gogarten J.P."/>
            <person name="Alloisio N."/>
            <person name="Bagnarol E."/>
            <person name="Bassi C.A."/>
            <person name="Berry A.M."/>
            <person name="Bickhart D.M."/>
            <person name="Choisne N."/>
            <person name="Couloux A."/>
            <person name="Cournoyer B."/>
            <person name="Cruveiller S."/>
            <person name="Daubin V."/>
            <person name="Demange N."/>
            <person name="Francino M.P."/>
            <person name="Goltsman E."/>
            <person name="Huang Y."/>
            <person name="Kopp O.R."/>
            <person name="Labarre L."/>
            <person name="Lapidus A."/>
            <person name="Lavire C."/>
            <person name="Marechal J."/>
            <person name="Martinez M."/>
            <person name="Mastronunzio J.E."/>
            <person name="Mullin B.C."/>
            <person name="Niemann J."/>
            <person name="Pujic P."/>
            <person name="Rawnsley T."/>
            <person name="Rouy Z."/>
            <person name="Schenowitz C."/>
            <person name="Sellstedt A."/>
            <person name="Tavares F."/>
            <person name="Tomkins J.P."/>
            <person name="Vallenet D."/>
            <person name="Valverde C."/>
            <person name="Wall L.G."/>
            <person name="Wang Y."/>
            <person name="Medigue C."/>
            <person name="Benson D.R."/>
        </authorList>
    </citation>
    <scope>NUCLEOTIDE SEQUENCE [LARGE SCALE GENOMIC DNA]</scope>
    <source>
        <strain>EAN1pec</strain>
    </source>
</reference>
<proteinExistence type="inferred from homology"/>
<feature type="chain" id="PRO_1000120300" description="GMP synthase [glutamine-hydrolyzing]">
    <location>
        <begin position="1"/>
        <end position="534"/>
    </location>
</feature>
<feature type="domain" description="Glutamine amidotransferase type-1" evidence="1">
    <location>
        <begin position="20"/>
        <end position="210"/>
    </location>
</feature>
<feature type="domain" description="GMPS ATP-PPase" evidence="1">
    <location>
        <begin position="211"/>
        <end position="408"/>
    </location>
</feature>
<feature type="active site" description="Nucleophile" evidence="1">
    <location>
        <position position="97"/>
    </location>
</feature>
<feature type="active site" evidence="1">
    <location>
        <position position="184"/>
    </location>
</feature>
<feature type="active site" evidence="1">
    <location>
        <position position="186"/>
    </location>
</feature>
<feature type="binding site" evidence="1">
    <location>
        <begin position="238"/>
        <end position="244"/>
    </location>
    <ligand>
        <name>ATP</name>
        <dbReference type="ChEBI" id="CHEBI:30616"/>
    </ligand>
</feature>
<gene>
    <name evidence="1" type="primary">guaA</name>
    <name type="ordered locus">Franean1_5989</name>
</gene>
<comment type="function">
    <text evidence="1">Catalyzes the synthesis of GMP from XMP.</text>
</comment>
<comment type="catalytic activity">
    <reaction evidence="1">
        <text>XMP + L-glutamine + ATP + H2O = GMP + L-glutamate + AMP + diphosphate + 2 H(+)</text>
        <dbReference type="Rhea" id="RHEA:11680"/>
        <dbReference type="ChEBI" id="CHEBI:15377"/>
        <dbReference type="ChEBI" id="CHEBI:15378"/>
        <dbReference type="ChEBI" id="CHEBI:29985"/>
        <dbReference type="ChEBI" id="CHEBI:30616"/>
        <dbReference type="ChEBI" id="CHEBI:33019"/>
        <dbReference type="ChEBI" id="CHEBI:57464"/>
        <dbReference type="ChEBI" id="CHEBI:58115"/>
        <dbReference type="ChEBI" id="CHEBI:58359"/>
        <dbReference type="ChEBI" id="CHEBI:456215"/>
        <dbReference type="EC" id="6.3.5.2"/>
    </reaction>
</comment>
<comment type="pathway">
    <text evidence="1">Purine metabolism; GMP biosynthesis; GMP from XMP (L-Gln route): step 1/1.</text>
</comment>
<comment type="subunit">
    <text evidence="1">Homodimer.</text>
</comment>
<protein>
    <recommendedName>
        <fullName evidence="1">GMP synthase [glutamine-hydrolyzing]</fullName>
        <ecNumber evidence="1">6.3.5.2</ecNumber>
    </recommendedName>
    <alternativeName>
        <fullName evidence="1">GMP synthetase</fullName>
    </alternativeName>
    <alternativeName>
        <fullName evidence="1">Glutamine amidotransferase</fullName>
    </alternativeName>
</protein>
<name>GUAA_PARS2</name>